<proteinExistence type="evidence at protein level"/>
<name>ANXA7_DICDI</name>
<comment type="function">
    <text>Calcium/phospholipid-binding protein which promotes membrane fusion and is involved in exocytosis.</text>
</comment>
<comment type="alternative products">
    <event type="alternative splicing"/>
    <isoform>
        <id>P24639-1</id>
        <name>Long</name>
        <sequence type="displayed"/>
    </isoform>
    <isoform>
        <id>P24639-2</id>
        <name>Short</name>
        <sequence type="described" ref="VSP_000288"/>
    </isoform>
</comment>
<comment type="domain">
    <text>A pair of annexin repeats may form one binding site for calcium and phospholipid.</text>
</comment>
<comment type="similarity">
    <text evidence="1 4">Belongs to the annexin family.</text>
</comment>
<reference key="1">
    <citation type="journal article" date="1991" name="Biochim. Biophys. Acta">
        <title>Sequence and expression of annexin VII of Dictyostelium discoideum.</title>
        <authorList>
            <person name="Greenwood M."/>
            <person name="Tsang A."/>
        </authorList>
    </citation>
    <scope>NUCLEOTIDE SEQUENCE [GENOMIC DNA] (ISOFORM LONG)</scope>
    <source>
        <strain>AX2</strain>
    </source>
</reference>
<reference key="2">
    <citation type="journal article" date="1991" name="J. Biol. Chem.">
        <title>Dictyostelium annexin VII (synexin). cDNA sequence and isolation of a gene disruption mutant.</title>
        <authorList>
            <person name="Doring V."/>
            <person name="Schleicher M."/>
            <person name="Noegel A.A."/>
        </authorList>
    </citation>
    <scope>NUCLEOTIDE SEQUENCE [MRNA] (ISOFORM SHORT)</scope>
    <source>
        <strain>AX4</strain>
    </source>
</reference>
<reference key="3">
    <citation type="journal article" date="2005" name="Nature">
        <title>The genome of the social amoeba Dictyostelium discoideum.</title>
        <authorList>
            <person name="Eichinger L."/>
            <person name="Pachebat J.A."/>
            <person name="Gloeckner G."/>
            <person name="Rajandream M.A."/>
            <person name="Sucgang R."/>
            <person name="Berriman M."/>
            <person name="Song J."/>
            <person name="Olsen R."/>
            <person name="Szafranski K."/>
            <person name="Xu Q."/>
            <person name="Tunggal B."/>
            <person name="Kummerfeld S."/>
            <person name="Madera M."/>
            <person name="Konfortov B.A."/>
            <person name="Rivero F."/>
            <person name="Bankier A.T."/>
            <person name="Lehmann R."/>
            <person name="Hamlin N."/>
            <person name="Davies R."/>
            <person name="Gaudet P."/>
            <person name="Fey P."/>
            <person name="Pilcher K."/>
            <person name="Chen G."/>
            <person name="Saunders D."/>
            <person name="Sodergren E.J."/>
            <person name="Davis P."/>
            <person name="Kerhornou A."/>
            <person name="Nie X."/>
            <person name="Hall N."/>
            <person name="Anjard C."/>
            <person name="Hemphill L."/>
            <person name="Bason N."/>
            <person name="Farbrother P."/>
            <person name="Desany B."/>
            <person name="Just E."/>
            <person name="Morio T."/>
            <person name="Rost R."/>
            <person name="Churcher C.M."/>
            <person name="Cooper J."/>
            <person name="Haydock S."/>
            <person name="van Driessche N."/>
            <person name="Cronin A."/>
            <person name="Goodhead I."/>
            <person name="Muzny D.M."/>
            <person name="Mourier T."/>
            <person name="Pain A."/>
            <person name="Lu M."/>
            <person name="Harper D."/>
            <person name="Lindsay R."/>
            <person name="Hauser H."/>
            <person name="James K.D."/>
            <person name="Quiles M."/>
            <person name="Madan Babu M."/>
            <person name="Saito T."/>
            <person name="Buchrieser C."/>
            <person name="Wardroper A."/>
            <person name="Felder M."/>
            <person name="Thangavelu M."/>
            <person name="Johnson D."/>
            <person name="Knights A."/>
            <person name="Loulseged H."/>
            <person name="Mungall K.L."/>
            <person name="Oliver K."/>
            <person name="Price C."/>
            <person name="Quail M.A."/>
            <person name="Urushihara H."/>
            <person name="Hernandez J."/>
            <person name="Rabbinowitsch E."/>
            <person name="Steffen D."/>
            <person name="Sanders M."/>
            <person name="Ma J."/>
            <person name="Kohara Y."/>
            <person name="Sharp S."/>
            <person name="Simmonds M.N."/>
            <person name="Spiegler S."/>
            <person name="Tivey A."/>
            <person name="Sugano S."/>
            <person name="White B."/>
            <person name="Walker D."/>
            <person name="Woodward J.R."/>
            <person name="Winckler T."/>
            <person name="Tanaka Y."/>
            <person name="Shaulsky G."/>
            <person name="Schleicher M."/>
            <person name="Weinstock G.M."/>
            <person name="Rosenthal A."/>
            <person name="Cox E.C."/>
            <person name="Chisholm R.L."/>
            <person name="Gibbs R.A."/>
            <person name="Loomis W.F."/>
            <person name="Platzer M."/>
            <person name="Kay R.R."/>
            <person name="Williams J.G."/>
            <person name="Dear P.H."/>
            <person name="Noegel A.A."/>
            <person name="Barrell B.G."/>
            <person name="Kuspa A."/>
        </authorList>
    </citation>
    <scope>NUCLEOTIDE SEQUENCE [LARGE SCALE GENOMIC DNA]</scope>
    <source>
        <strain>AX4</strain>
    </source>
</reference>
<reference key="4">
    <citation type="journal article" date="1991" name="J. Biol. Chem.">
        <title>Identification of a homologue for annexin VII (synexin) in Dictyostelium discoideum.</title>
        <authorList>
            <person name="Gerke V."/>
        </authorList>
    </citation>
    <scope>PROTEIN SEQUENCE OF 143-437</scope>
</reference>
<reference key="5">
    <citation type="journal article" date="2006" name="Mol. Cell. Proteomics">
        <title>Proteomics fingerprinting of phagosome maturation and evidence for the role of a Galpha during uptake.</title>
        <authorList>
            <person name="Gotthardt D."/>
            <person name="Blancheteau V."/>
            <person name="Bosserhoff A."/>
            <person name="Ruppert T."/>
            <person name="Delorenzi M."/>
            <person name="Soldati T."/>
        </authorList>
    </citation>
    <scope>IDENTIFICATION BY MASS SPECTROMETRY [LARGE SCALE ANALYSIS]</scope>
    <source>
        <strain>AX2</strain>
    </source>
</reference>
<reference key="6">
    <citation type="journal article" date="1997" name="J. Mol. Biol.">
        <title>Crystal structure of the C-terminal tetrad repeat from synexin (annexin VII) of Dictyostelium discoideum.</title>
        <authorList>
            <person name="Liemann S."/>
            <person name="Bringemeier I."/>
            <person name="Benz J."/>
            <person name="Goettig P."/>
            <person name="Hofmann A."/>
            <person name="Huber R."/>
            <person name="Noegel A.A."/>
            <person name="Jacob U."/>
        </authorList>
    </citation>
    <scope>X-RAY CRYSTALLOGRAPHY (2.45 ANGSTROMS) OF 108-462</scope>
</reference>
<feature type="chain" id="PRO_0000067502" description="Annexin A7">
    <location>
        <begin position="1"/>
        <end position="462"/>
    </location>
</feature>
<feature type="repeat" description="Annexin 1" evidence="1">
    <location>
        <begin position="161"/>
        <end position="232"/>
    </location>
</feature>
<feature type="repeat" description="Annexin 2" evidence="1">
    <location>
        <begin position="233"/>
        <end position="304"/>
    </location>
</feature>
<feature type="repeat" description="Annexin 3" evidence="1">
    <location>
        <begin position="315"/>
        <end position="388"/>
    </location>
</feature>
<feature type="repeat" description="Annexin 4" evidence="1">
    <location>
        <begin position="392"/>
        <end position="462"/>
    </location>
</feature>
<feature type="region of interest" description="Disordered" evidence="2">
    <location>
        <begin position="1"/>
        <end position="130"/>
    </location>
</feature>
<feature type="region of interest" description="19 X 6 AA tandem repeats of Q-G-Y-P-P-Q">
    <location>
        <begin position="7"/>
        <end position="131"/>
    </location>
</feature>
<feature type="compositionally biased region" description="Low complexity" evidence="2">
    <location>
        <begin position="16"/>
        <end position="130"/>
    </location>
</feature>
<feature type="splice variant" id="VSP_000288" description="In isoform Short." evidence="3">
    <location>
        <begin position="13"/>
        <end position="55"/>
    </location>
</feature>
<feature type="sequence conflict" description="In Ref. 2; AAA33166." evidence="4" ref="2">
    <original>A</original>
    <variation>R</variation>
    <location>
        <position position="245"/>
    </location>
</feature>
<dbReference type="EMBL" id="X60269">
    <property type="protein sequence ID" value="CAA42815.1"/>
    <property type="molecule type" value="Genomic_DNA"/>
</dbReference>
<dbReference type="EMBL" id="X60270">
    <property type="protein sequence ID" value="CAA42815.1"/>
    <property type="status" value="JOINED"/>
    <property type="molecule type" value="mRNA"/>
</dbReference>
<dbReference type="EMBL" id="X60270">
    <property type="protein sequence ID" value="CAA42816.1"/>
    <property type="molecule type" value="mRNA"/>
</dbReference>
<dbReference type="EMBL" id="M69022">
    <property type="protein sequence ID" value="AAA33166.1"/>
    <property type="molecule type" value="mRNA"/>
</dbReference>
<dbReference type="EMBL" id="AAFI02000005">
    <property type="protein sequence ID" value="EAL71930.1"/>
    <property type="molecule type" value="Genomic_DNA"/>
</dbReference>
<dbReference type="EMBL" id="AAFI02000005">
    <property type="protein sequence ID" value="EAS66935.1"/>
    <property type="molecule type" value="Genomic_DNA"/>
</dbReference>
<dbReference type="PIR" id="S14723">
    <property type="entry name" value="LUDO7"/>
</dbReference>
<dbReference type="RefSeq" id="XP_001134471.1">
    <property type="nucleotide sequence ID" value="XM_001134471.1"/>
</dbReference>
<dbReference type="RefSeq" id="XP_646006.1">
    <property type="nucleotide sequence ID" value="XM_640914.1"/>
</dbReference>
<dbReference type="SMR" id="P24639"/>
<dbReference type="FunCoup" id="P24639">
    <property type="interactions" value="179"/>
</dbReference>
<dbReference type="STRING" id="44689.P24639"/>
<dbReference type="PaxDb" id="44689-DDB0232009"/>
<dbReference type="EnsemblProtists" id="EAL71930">
    <property type="protein sequence ID" value="EAL71930"/>
    <property type="gene ID" value="DDB_G0269160"/>
</dbReference>
<dbReference type="EnsemblProtists" id="EAS66935">
    <property type="protein sequence ID" value="EAS66935"/>
    <property type="gene ID" value="DDB_G0269160"/>
</dbReference>
<dbReference type="GeneID" id="8616954"/>
<dbReference type="KEGG" id="ddi:DDB_G0269160"/>
<dbReference type="dictyBase" id="DDB_G0269160">
    <property type="gene designation" value="nxnA"/>
</dbReference>
<dbReference type="VEuPathDB" id="AmoebaDB:DDB_G0269160"/>
<dbReference type="eggNOG" id="KOG0819">
    <property type="taxonomic scope" value="Eukaryota"/>
</dbReference>
<dbReference type="HOGENOM" id="CLU_025300_6_2_1"/>
<dbReference type="InParanoid" id="P24639"/>
<dbReference type="OMA" id="CYVEHDV"/>
<dbReference type="PhylomeDB" id="P24639"/>
<dbReference type="Reactome" id="R-DDI-114608">
    <property type="pathway name" value="Platelet degranulation"/>
</dbReference>
<dbReference type="Reactome" id="R-DDI-6798695">
    <property type="pathway name" value="Neutrophil degranulation"/>
</dbReference>
<dbReference type="PRO" id="PR:P24639"/>
<dbReference type="Proteomes" id="UP000002195">
    <property type="component" value="Chromosome 1"/>
</dbReference>
<dbReference type="GO" id="GO:0005737">
    <property type="term" value="C:cytoplasm"/>
    <property type="evidence" value="ECO:0000314"/>
    <property type="project" value="dictyBase"/>
</dbReference>
<dbReference type="GO" id="GO:0010008">
    <property type="term" value="C:endosome membrane"/>
    <property type="evidence" value="ECO:0000314"/>
    <property type="project" value="dictyBase"/>
</dbReference>
<dbReference type="GO" id="GO:0005634">
    <property type="term" value="C:nucleus"/>
    <property type="evidence" value="ECO:0000314"/>
    <property type="project" value="dictyBase"/>
</dbReference>
<dbReference type="GO" id="GO:0045335">
    <property type="term" value="C:phagocytic vesicle"/>
    <property type="evidence" value="ECO:0007005"/>
    <property type="project" value="dictyBase"/>
</dbReference>
<dbReference type="GO" id="GO:0005886">
    <property type="term" value="C:plasma membrane"/>
    <property type="evidence" value="ECO:0000314"/>
    <property type="project" value="dictyBase"/>
</dbReference>
<dbReference type="GO" id="GO:0012506">
    <property type="term" value="C:vesicle membrane"/>
    <property type="evidence" value="ECO:0000318"/>
    <property type="project" value="GO_Central"/>
</dbReference>
<dbReference type="GO" id="GO:0005509">
    <property type="term" value="F:calcium ion binding"/>
    <property type="evidence" value="ECO:0007669"/>
    <property type="project" value="InterPro"/>
</dbReference>
<dbReference type="GO" id="GO:0005544">
    <property type="term" value="F:calcium-dependent phospholipid binding"/>
    <property type="evidence" value="ECO:0000314"/>
    <property type="project" value="dictyBase"/>
</dbReference>
<dbReference type="GO" id="GO:0001786">
    <property type="term" value="F:phosphatidylserine binding"/>
    <property type="evidence" value="ECO:0000314"/>
    <property type="project" value="dictyBase"/>
</dbReference>
<dbReference type="GO" id="GO:0006874">
    <property type="term" value="P:intracellular calcium ion homeostasis"/>
    <property type="evidence" value="ECO:0000315"/>
    <property type="project" value="dictyBase"/>
</dbReference>
<dbReference type="GO" id="GO:0001778">
    <property type="term" value="P:plasma membrane repair"/>
    <property type="evidence" value="ECO:0000315"/>
    <property type="project" value="dictyBase"/>
</dbReference>
<dbReference type="GO" id="GO:0009617">
    <property type="term" value="P:response to bacterium"/>
    <property type="evidence" value="ECO:0007007"/>
    <property type="project" value="dictyBase"/>
</dbReference>
<dbReference type="GO" id="GO:0009611">
    <property type="term" value="P:response to wounding"/>
    <property type="evidence" value="ECO:0000315"/>
    <property type="project" value="dictyBase"/>
</dbReference>
<dbReference type="GO" id="GO:0030587">
    <property type="term" value="P:sorocarp development"/>
    <property type="evidence" value="ECO:0000315"/>
    <property type="project" value="dictyBase"/>
</dbReference>
<dbReference type="FunFam" id="1.10.220.10:FF:000002">
    <property type="entry name" value="Annexin"/>
    <property type="match status" value="1"/>
</dbReference>
<dbReference type="FunFam" id="1.10.220.10:FF:000003">
    <property type="entry name" value="Annexin"/>
    <property type="match status" value="1"/>
</dbReference>
<dbReference type="FunFam" id="1.10.220.10:FF:000005">
    <property type="entry name" value="Annexin"/>
    <property type="match status" value="1"/>
</dbReference>
<dbReference type="FunFam" id="1.10.220.10:FF:000014">
    <property type="entry name" value="annexin D4"/>
    <property type="match status" value="1"/>
</dbReference>
<dbReference type="Gene3D" id="1.10.220.10">
    <property type="entry name" value="Annexin"/>
    <property type="match status" value="4"/>
</dbReference>
<dbReference type="InterPro" id="IPR001464">
    <property type="entry name" value="Annexin"/>
</dbReference>
<dbReference type="InterPro" id="IPR018502">
    <property type="entry name" value="Annexin_repeat"/>
</dbReference>
<dbReference type="InterPro" id="IPR018252">
    <property type="entry name" value="Annexin_repeat_CS"/>
</dbReference>
<dbReference type="InterPro" id="IPR037104">
    <property type="entry name" value="Annexin_sf"/>
</dbReference>
<dbReference type="PANTHER" id="PTHR10502">
    <property type="entry name" value="ANNEXIN"/>
    <property type="match status" value="1"/>
</dbReference>
<dbReference type="PANTHER" id="PTHR10502:SF102">
    <property type="entry name" value="ANNEXIN B11"/>
    <property type="match status" value="1"/>
</dbReference>
<dbReference type="Pfam" id="PF00191">
    <property type="entry name" value="Annexin"/>
    <property type="match status" value="4"/>
</dbReference>
<dbReference type="PRINTS" id="PR00196">
    <property type="entry name" value="ANNEXIN"/>
</dbReference>
<dbReference type="SMART" id="SM00335">
    <property type="entry name" value="ANX"/>
    <property type="match status" value="4"/>
</dbReference>
<dbReference type="SUPFAM" id="SSF47874">
    <property type="entry name" value="Annexin"/>
    <property type="match status" value="1"/>
</dbReference>
<dbReference type="PROSITE" id="PS00223">
    <property type="entry name" value="ANNEXIN_1"/>
    <property type="match status" value="2"/>
</dbReference>
<dbReference type="PROSITE" id="PS51897">
    <property type="entry name" value="ANNEXIN_2"/>
    <property type="match status" value="4"/>
</dbReference>
<protein>
    <recommendedName>
        <fullName>Annexin A7</fullName>
    </recommendedName>
    <alternativeName>
        <fullName>Annexin VII</fullName>
    </alternativeName>
    <alternativeName>
        <fullName>Annexin-7</fullName>
    </alternativeName>
    <alternativeName>
        <fullName>Synexin</fullName>
    </alternativeName>
</protein>
<organism>
    <name type="scientific">Dictyostelium discoideum</name>
    <name type="common">Social amoeba</name>
    <dbReference type="NCBI Taxonomy" id="44689"/>
    <lineage>
        <taxon>Eukaryota</taxon>
        <taxon>Amoebozoa</taxon>
        <taxon>Evosea</taxon>
        <taxon>Eumycetozoa</taxon>
        <taxon>Dictyostelia</taxon>
        <taxon>Dictyosteliales</taxon>
        <taxon>Dictyosteliaceae</taxon>
        <taxon>Dictyostelium</taxon>
    </lineage>
</organism>
<keyword id="KW-0025">Alternative splicing</keyword>
<keyword id="KW-0041">Annexin</keyword>
<keyword id="KW-0106">Calcium</keyword>
<keyword id="KW-0111">Calcium/phospholipid-binding</keyword>
<keyword id="KW-0903">Direct protein sequencing</keyword>
<keyword id="KW-1185">Reference proteome</keyword>
<keyword id="KW-0677">Repeat</keyword>
<gene>
    <name type="primary">nxnA</name>
    <name type="synonym">ann7</name>
    <name type="ORF">DDB_G0269160</name>
</gene>
<sequence>MSYPPNQGYPPQSNSPQPGQYGAPQQGYPPQQGYPPQQGYPPQQGYPPQQGYPPQQGYPPQQGYPPQQGYPPQQGYPPQQGYPPQQGYPPQQGYPPQQGYPPQQGYPPQQGYPPQQGYPPQGYPPQQGYPPVGVPVGVPVGFAPGMVVGYHQGYFVGTITHDCKHDAEVLRKAMKGIGTNESDLIKVLANRNWAEREQIKREFSAKYSKDLIQDIKSETSGNFEKCLVALLTEPAHFDVEQIHSACAGAGTNENTIIEILVTRSNVQMEYIKQIFKNKHGKSLKDRLESEASGDFKKLLEKLTEPRDESPVINPMQVSKDAEDLYKAGEGKIGTDEKEFIKILTSRSLPHIAAVASEYIKHHKKHSLIKAIDSEFSGSIKTGLIAIVTYALNPYGYFAEILNKSMKGAGTNDNKLIRTVVTQMHNMPQIKTAYSTLFKNSLAHDIQADCSGDFKKLLLDIIS</sequence>
<evidence type="ECO:0000255" key="1">
    <source>
        <dbReference type="PROSITE-ProRule" id="PRU01245"/>
    </source>
</evidence>
<evidence type="ECO:0000256" key="2">
    <source>
        <dbReference type="SAM" id="MobiDB-lite"/>
    </source>
</evidence>
<evidence type="ECO:0000303" key="3">
    <source>
    </source>
</evidence>
<evidence type="ECO:0000305" key="4"/>
<accession>P24639</accession>
<accession>Q1ZXQ3</accession>
<accession>Q55DX5</accession>